<proteinExistence type="evidence at protein level"/>
<evidence type="ECO:0000250" key="1">
    <source>
        <dbReference type="UniProtKB" id="P40879"/>
    </source>
</evidence>
<evidence type="ECO:0000255" key="2"/>
<evidence type="ECO:0000255" key="3">
    <source>
        <dbReference type="PROSITE-ProRule" id="PRU00198"/>
    </source>
</evidence>
<evidence type="ECO:0000269" key="4">
    <source>
    </source>
</evidence>
<evidence type="ECO:0000269" key="5">
    <source>
    </source>
</evidence>
<evidence type="ECO:0000269" key="6">
    <source>
    </source>
</evidence>
<evidence type="ECO:0000305" key="7"/>
<evidence type="ECO:0007829" key="8">
    <source>
        <dbReference type="PDB" id="5DOW"/>
    </source>
</evidence>
<comment type="function">
    <text evidence="4 5">Mediates chloride-bicarbonate exchange with a chloride bicarbonate stoichiometry of 2:1 in the intestinal epithelia (PubMed:10428871). Plays a role in the chloride and bicarbonate homeostasis during sperm epididymal maturation and capacitation (PubMed:21976599).</text>
</comment>
<comment type="catalytic activity">
    <reaction evidence="4 5">
        <text>hydrogencarbonate(in) + 2 chloride(out) = hydrogencarbonate(out) + 2 chloride(in)</text>
        <dbReference type="Rhea" id="RHEA:72203"/>
        <dbReference type="ChEBI" id="CHEBI:17544"/>
        <dbReference type="ChEBI" id="CHEBI:17996"/>
    </reaction>
</comment>
<comment type="subunit">
    <text evidence="1 5 6">Interacts with PDZK1 (By similarity). Interacts with CFTR, SLC26A6 and NHERF1 (PubMed:21976599). Interacts (via PDZ-binding motif) with NHERF4 (via the third PDZ domain) (PubMed:22627094). This interaction leads to decreased expression of SLC26A3 on the cell membrane resulting in its reduced exchanger activity (By similarity).</text>
</comment>
<comment type="interaction">
    <interactant intactId="EBI-6895537">
        <id>Q9WVC8</id>
    </interactant>
    <interactant intactId="EBI-6115317">
        <id>P26361</id>
        <label>Cftr</label>
    </interactant>
    <organismsDiffer>false</organismsDiffer>
    <experiments>3</experiments>
</comment>
<comment type="interaction">
    <interactant intactId="EBI-6895537">
        <id>Q9WVC8</id>
    </interactant>
    <interactant intactId="EBI-1184085">
        <id>P70441</id>
        <label>Nherf1</label>
    </interactant>
    <organismsDiffer>false</organismsDiffer>
    <experiments>2</experiments>
</comment>
<comment type="interaction">
    <interactant intactId="EBI-6895537">
        <id>Q9WVC8</id>
    </interactant>
    <interactant intactId="EBI-6895517">
        <id>Q8CIW6</id>
        <label>Slc26a6</label>
    </interactant>
    <organismsDiffer>false</organismsDiffer>
    <experiments>2</experiments>
</comment>
<comment type="subcellular location">
    <subcellularLocation>
        <location evidence="1">Apical cell membrane</location>
        <topology evidence="2">Multi-pass membrane protein</topology>
    </subcellularLocation>
    <subcellularLocation>
        <location evidence="5">Membrane</location>
        <topology evidence="2">Multi-pass membrane protein</topology>
    </subcellularLocation>
    <subcellularLocation>
        <location evidence="1">Cell membrane</location>
        <topology evidence="2">Multi-pass membrane protein</topology>
    </subcellularLocation>
    <text evidence="5">Localized in sperm membranes. Midpiece of sperm tail. Colocalizes with CFTR at the midpiece of sperm tail.</text>
</comment>
<comment type="tissue specificity">
    <text evidence="4 5">Expressed in spermatogenic cells (PubMed:21976599). Expressed at high levels in cecum and colon and at lower levels in small intestine (PubMed:10428871).</text>
</comment>
<comment type="PTM">
    <text evidence="1">N-glycosylation is required for efficient cell surface expression, and protection from proteolytic degradation.</text>
</comment>
<comment type="similarity">
    <text evidence="7">Belongs to the SLC26A/SulP transporter (TC 2.A.53) family.</text>
</comment>
<gene>
    <name type="primary">Slc26a3</name>
    <name type="synonym">Dra</name>
</gene>
<sequence length="757" mass="83590">MIEAIGNQYVVARPVYSTKTFGEEFKKTHRHHKTFLDHLKGCCSCSSQKAKKIALSLFPIASWLPAYKIKEWLLSDIVSGISTGLVAVLQGLAFALLVNIPPAYGLYAAFFPVITYFFLGTSRHISVGPFPVLSMMVGVVVTRVVSDPNASSELSSSSTENDSFIEEKVMVAASVTVLSGIIQLLLGVLQVGFVVIYLSESLISGFTTAAAIHVLVSQLKFMLQLPVPAYSDPFSIFKVLESVFTQIQKTNIADLVTSVIILVVVFVFKEINQRYRSKLPVPIPIELIMTVIATGVSYGCNFEDRFGVAVVGNMSLGFQPPITPSVEVFQDTIGDSFGIAIVGFAVAFSVASVYSLKYDYPIDGNQELIALGVSNIFTGAFKGFAGSTALSRSGVQESTGGKTQVAGLLSAVIVLIVIVAIGFLLQPLQKSVLAALALGNLKGMLMQFAEIGRLWKKDKYDCLIWIMTFIFAIVLGLGLGLAASVAFQLLTIVFRTQFPKCSTLANVGRSNIYKNKKNYAEVYEPEGVKIFRCPSPIYFANIGFFKQKLIDAVGFSPLRILRKRNKALKKIRKLQKRGLIQMTPKGFICTSDGFKDSDEELDNNQIEELDQPINTTDLPFDIDWNGDLPLNITIPKISLHSLILDFSAVSFLDVSSMRGLRTILQEFIRIKVDVYIVGTDDDFIDKLARCEFFDDEVTDSIFFLTIHDAILHILMKKDYSTSKFNSSQEKERKFDFTINTNGGLRNRECQVPVETKF</sequence>
<feature type="chain" id="PRO_0000080162" description="Chloride anion exchanger">
    <location>
        <begin position="1"/>
        <end position="757"/>
    </location>
</feature>
<feature type="topological domain" description="Cytoplasmic" evidence="7">
    <location>
        <begin position="1"/>
        <end position="71"/>
    </location>
</feature>
<feature type="transmembrane region" description="Helical" evidence="2">
    <location>
        <begin position="72"/>
        <end position="92"/>
    </location>
</feature>
<feature type="topological domain" description="Extracellular" evidence="7">
    <location>
        <position position="93"/>
    </location>
</feature>
<feature type="transmembrane region" description="Helical" evidence="2">
    <location>
        <begin position="94"/>
        <end position="114"/>
    </location>
</feature>
<feature type="topological domain" description="Cytoplasmic" evidence="7">
    <location>
        <begin position="115"/>
        <end position="124"/>
    </location>
</feature>
<feature type="transmembrane region" description="Helical" evidence="2">
    <location>
        <begin position="125"/>
        <end position="145"/>
    </location>
</feature>
<feature type="topological domain" description="Extracellular" evidence="7">
    <location>
        <begin position="146"/>
        <end position="176"/>
    </location>
</feature>
<feature type="transmembrane region" description="Helical" evidence="2">
    <location>
        <begin position="177"/>
        <end position="197"/>
    </location>
</feature>
<feature type="topological domain" description="Cytoplasmic" evidence="7">
    <location>
        <begin position="198"/>
        <end position="201"/>
    </location>
</feature>
<feature type="transmembrane region" description="Helical" evidence="2">
    <location>
        <begin position="202"/>
        <end position="222"/>
    </location>
</feature>
<feature type="topological domain" description="Extracellular" evidence="7">
    <location>
        <begin position="223"/>
        <end position="250"/>
    </location>
</feature>
<feature type="transmembrane region" description="Helical" evidence="2">
    <location>
        <begin position="251"/>
        <end position="271"/>
    </location>
</feature>
<feature type="topological domain" description="Cytoplasmic" evidence="7">
    <location>
        <begin position="272"/>
        <end position="278"/>
    </location>
</feature>
<feature type="transmembrane region" description="Helical" evidence="2">
    <location>
        <begin position="279"/>
        <end position="299"/>
    </location>
</feature>
<feature type="topological domain" description="Extracellular" evidence="7">
    <location>
        <begin position="300"/>
        <end position="335"/>
    </location>
</feature>
<feature type="transmembrane region" description="Helical" evidence="2">
    <location>
        <begin position="336"/>
        <end position="356"/>
    </location>
</feature>
<feature type="topological domain" description="Cytoplasmic" evidence="7">
    <location>
        <begin position="357"/>
        <end position="367"/>
    </location>
</feature>
<feature type="transmembrane region" description="Helical" evidence="2">
    <location>
        <begin position="368"/>
        <end position="388"/>
    </location>
</feature>
<feature type="topological domain" description="Extracellular" evidence="7">
    <location>
        <begin position="389"/>
        <end position="404"/>
    </location>
</feature>
<feature type="transmembrane region" description="Helical" evidence="2">
    <location>
        <begin position="405"/>
        <end position="425"/>
    </location>
</feature>
<feature type="topological domain" description="Cytoplasmic" evidence="7">
    <location>
        <begin position="426"/>
        <end position="462"/>
    </location>
</feature>
<feature type="transmembrane region" description="Helical" evidence="2">
    <location>
        <begin position="463"/>
        <end position="483"/>
    </location>
</feature>
<feature type="topological domain" description="Extracellular" evidence="7">
    <location>
        <begin position="484"/>
        <end position="757"/>
    </location>
</feature>
<feature type="domain" description="STAS" evidence="3">
    <location>
        <begin position="518"/>
        <end position="713"/>
    </location>
</feature>
<feature type="short sequence motif" description="PDZ-binding" evidence="1">
    <location>
        <begin position="754"/>
        <end position="757"/>
    </location>
</feature>
<feature type="glycosylation site" description="N-linked (GlcNAc...) asparagine" evidence="2">
    <location>
        <position position="149"/>
    </location>
</feature>
<feature type="glycosylation site" description="N-linked (GlcNAc...) asparagine" evidence="2">
    <location>
        <position position="161"/>
    </location>
</feature>
<feature type="helix" evidence="8">
    <location>
        <begin position="566"/>
        <end position="576"/>
    </location>
</feature>
<feature type="helix" evidence="8">
    <location>
        <begin position="579"/>
        <end position="582"/>
    </location>
</feature>
<organism>
    <name type="scientific">Mus musculus</name>
    <name type="common">Mouse</name>
    <dbReference type="NCBI Taxonomy" id="10090"/>
    <lineage>
        <taxon>Eukaryota</taxon>
        <taxon>Metazoa</taxon>
        <taxon>Chordata</taxon>
        <taxon>Craniata</taxon>
        <taxon>Vertebrata</taxon>
        <taxon>Euteleostomi</taxon>
        <taxon>Mammalia</taxon>
        <taxon>Eutheria</taxon>
        <taxon>Euarchontoglires</taxon>
        <taxon>Glires</taxon>
        <taxon>Rodentia</taxon>
        <taxon>Myomorpha</taxon>
        <taxon>Muroidea</taxon>
        <taxon>Muridae</taxon>
        <taxon>Murinae</taxon>
        <taxon>Mus</taxon>
        <taxon>Mus</taxon>
    </lineage>
</organism>
<dbReference type="EMBL" id="AF136751">
    <property type="protein sequence ID" value="AAD42784.1"/>
    <property type="molecule type" value="mRNA"/>
</dbReference>
<dbReference type="EMBL" id="BC139271">
    <property type="protein sequence ID" value="AAI39272.1"/>
    <property type="molecule type" value="mRNA"/>
</dbReference>
<dbReference type="EMBL" id="BC139273">
    <property type="protein sequence ID" value="AAI39274.1"/>
    <property type="molecule type" value="mRNA"/>
</dbReference>
<dbReference type="CCDS" id="CCDS25863.1"/>
<dbReference type="RefSeq" id="NP_067328.1">
    <property type="nucleotide sequence ID" value="NM_021353.3"/>
</dbReference>
<dbReference type="RefSeq" id="XP_017170439.1">
    <property type="nucleotide sequence ID" value="XM_017314950.1"/>
</dbReference>
<dbReference type="PDB" id="5DOW">
    <property type="method" value="X-ray"/>
    <property type="resolution" value="1.70 A"/>
    <property type="chains" value="B/D/F/H=563-583"/>
</dbReference>
<dbReference type="PDBsum" id="5DOW"/>
<dbReference type="SMR" id="Q9WVC8"/>
<dbReference type="FunCoup" id="Q9WVC8">
    <property type="interactions" value="62"/>
</dbReference>
<dbReference type="IntAct" id="Q9WVC8">
    <property type="interactions" value="3"/>
</dbReference>
<dbReference type="STRING" id="10090.ENSMUSP00000001254"/>
<dbReference type="BindingDB" id="Q9WVC8"/>
<dbReference type="ChEMBL" id="CHEMBL4523503"/>
<dbReference type="TCDB" id="2.A.53.2.3">
    <property type="family name" value="the sulfate permease (sulp) family"/>
</dbReference>
<dbReference type="GlyCosmos" id="Q9WVC8">
    <property type="glycosylation" value="2 sites, No reported glycans"/>
</dbReference>
<dbReference type="GlyGen" id="Q9WVC8">
    <property type="glycosylation" value="3 sites"/>
</dbReference>
<dbReference type="PhosphoSitePlus" id="Q9WVC8"/>
<dbReference type="PaxDb" id="10090-ENSMUSP00000001254"/>
<dbReference type="ProteomicsDB" id="256672"/>
<dbReference type="Antibodypedia" id="31383">
    <property type="antibodies" value="98 antibodies from 27 providers"/>
</dbReference>
<dbReference type="DNASU" id="13487"/>
<dbReference type="Ensembl" id="ENSMUST00000001254.6">
    <property type="protein sequence ID" value="ENSMUSP00000001254.6"/>
    <property type="gene ID" value="ENSMUSG00000001225.13"/>
</dbReference>
<dbReference type="GeneID" id="13487"/>
<dbReference type="KEGG" id="mmu:13487"/>
<dbReference type="UCSC" id="uc007nhj.2">
    <property type="organism name" value="mouse"/>
</dbReference>
<dbReference type="AGR" id="MGI:107181"/>
<dbReference type="CTD" id="1811"/>
<dbReference type="MGI" id="MGI:107181">
    <property type="gene designation" value="Slc26a3"/>
</dbReference>
<dbReference type="VEuPathDB" id="HostDB:ENSMUSG00000001225"/>
<dbReference type="eggNOG" id="KOG0236">
    <property type="taxonomic scope" value="Eukaryota"/>
</dbReference>
<dbReference type="GeneTree" id="ENSGT01070000253775"/>
<dbReference type="HOGENOM" id="CLU_003182_9_4_1"/>
<dbReference type="InParanoid" id="Q9WVC8"/>
<dbReference type="OMA" id="WVMTFIF"/>
<dbReference type="OrthoDB" id="288203at2759"/>
<dbReference type="PhylomeDB" id="Q9WVC8"/>
<dbReference type="TreeFam" id="TF313784"/>
<dbReference type="Reactome" id="R-MMU-427601">
    <property type="pathway name" value="Multifunctional anion exchangers"/>
</dbReference>
<dbReference type="BioGRID-ORCS" id="13487">
    <property type="hits" value="1 hit in 79 CRISPR screens"/>
</dbReference>
<dbReference type="ChiTaRS" id="Slc26a3">
    <property type="organism name" value="mouse"/>
</dbReference>
<dbReference type="PRO" id="PR:Q9WVC8"/>
<dbReference type="Proteomes" id="UP000000589">
    <property type="component" value="Chromosome 12"/>
</dbReference>
<dbReference type="RNAct" id="Q9WVC8">
    <property type="molecule type" value="protein"/>
</dbReference>
<dbReference type="Bgee" id="ENSMUSG00000001225">
    <property type="expression patterns" value="Expressed in left colon and 46 other cell types or tissues"/>
</dbReference>
<dbReference type="ExpressionAtlas" id="Q9WVC8">
    <property type="expression patterns" value="baseline and differential"/>
</dbReference>
<dbReference type="GO" id="GO:0016324">
    <property type="term" value="C:apical plasma membrane"/>
    <property type="evidence" value="ECO:0007669"/>
    <property type="project" value="UniProtKB-SubCell"/>
</dbReference>
<dbReference type="GO" id="GO:0031526">
    <property type="term" value="C:brush border membrane"/>
    <property type="evidence" value="ECO:0007669"/>
    <property type="project" value="Ensembl"/>
</dbReference>
<dbReference type="GO" id="GO:0016020">
    <property type="term" value="C:membrane"/>
    <property type="evidence" value="ECO:0000314"/>
    <property type="project" value="UniProtKB"/>
</dbReference>
<dbReference type="GO" id="GO:0005886">
    <property type="term" value="C:plasma membrane"/>
    <property type="evidence" value="ECO:0000250"/>
    <property type="project" value="MGI"/>
</dbReference>
<dbReference type="GO" id="GO:0097225">
    <property type="term" value="C:sperm midpiece"/>
    <property type="evidence" value="ECO:0000314"/>
    <property type="project" value="UniProtKB"/>
</dbReference>
<dbReference type="GO" id="GO:0015106">
    <property type="term" value="F:bicarbonate transmembrane transporter activity"/>
    <property type="evidence" value="ECO:0000315"/>
    <property type="project" value="UniProtKB"/>
</dbReference>
<dbReference type="GO" id="GO:0015108">
    <property type="term" value="F:chloride transmembrane transporter activity"/>
    <property type="evidence" value="ECO:0000315"/>
    <property type="project" value="UniProtKB"/>
</dbReference>
<dbReference type="GO" id="GO:0140900">
    <property type="term" value="F:chloride:bicarbonate antiporter activity"/>
    <property type="evidence" value="ECO:0000314"/>
    <property type="project" value="UniProtKB"/>
</dbReference>
<dbReference type="GO" id="GO:0008271">
    <property type="term" value="F:secondary active sulfate transmembrane transporter activity"/>
    <property type="evidence" value="ECO:0007669"/>
    <property type="project" value="InterPro"/>
</dbReference>
<dbReference type="GO" id="GO:0071320">
    <property type="term" value="P:cellular response to cAMP"/>
    <property type="evidence" value="ECO:0000314"/>
    <property type="project" value="UniProtKB"/>
</dbReference>
<dbReference type="GO" id="GO:0051454">
    <property type="term" value="P:intracellular pH elevation"/>
    <property type="evidence" value="ECO:0000315"/>
    <property type="project" value="UniProtKB"/>
</dbReference>
<dbReference type="GO" id="GO:0060081">
    <property type="term" value="P:membrane hyperpolarization"/>
    <property type="evidence" value="ECO:0000315"/>
    <property type="project" value="UniProtKB"/>
</dbReference>
<dbReference type="GO" id="GO:0048240">
    <property type="term" value="P:sperm capacitation"/>
    <property type="evidence" value="ECO:0000315"/>
    <property type="project" value="UniProtKB"/>
</dbReference>
<dbReference type="CDD" id="cd07042">
    <property type="entry name" value="STAS_SulP_like_sulfate_transporter"/>
    <property type="match status" value="1"/>
</dbReference>
<dbReference type="Gene3D" id="3.30.750.24">
    <property type="entry name" value="STAS domain"/>
    <property type="match status" value="1"/>
</dbReference>
<dbReference type="InterPro" id="IPR018045">
    <property type="entry name" value="S04_transporter_CS"/>
</dbReference>
<dbReference type="InterPro" id="IPR011547">
    <property type="entry name" value="SLC26A/SulP_dom"/>
</dbReference>
<dbReference type="InterPro" id="IPR001902">
    <property type="entry name" value="SLC26A/SulP_fam"/>
</dbReference>
<dbReference type="InterPro" id="IPR002645">
    <property type="entry name" value="STAS_dom"/>
</dbReference>
<dbReference type="InterPro" id="IPR036513">
    <property type="entry name" value="STAS_dom_sf"/>
</dbReference>
<dbReference type="NCBIfam" id="TIGR00815">
    <property type="entry name" value="sulP"/>
    <property type="match status" value="1"/>
</dbReference>
<dbReference type="PANTHER" id="PTHR11814">
    <property type="entry name" value="SULFATE TRANSPORTER"/>
    <property type="match status" value="1"/>
</dbReference>
<dbReference type="Pfam" id="PF01740">
    <property type="entry name" value="STAS"/>
    <property type="match status" value="1"/>
</dbReference>
<dbReference type="Pfam" id="PF00916">
    <property type="entry name" value="Sulfate_transp"/>
    <property type="match status" value="1"/>
</dbReference>
<dbReference type="SUPFAM" id="SSF52091">
    <property type="entry name" value="SpoIIaa-like"/>
    <property type="match status" value="1"/>
</dbReference>
<dbReference type="PROSITE" id="PS01130">
    <property type="entry name" value="SLC26A"/>
    <property type="match status" value="1"/>
</dbReference>
<dbReference type="PROSITE" id="PS50801">
    <property type="entry name" value="STAS"/>
    <property type="match status" value="1"/>
</dbReference>
<name>S26A3_MOUSE</name>
<reference key="1">
    <citation type="journal article" date="1999" name="J. Biol. Chem.">
        <title>Mouse down-regulated in adenoma (DRA) is an intestinal Cl(-)/HCO(3)(-) exchanger and is up-regulated in colon of mice lacking the NHE3 Na(+)/H(+) exchanger.</title>
        <authorList>
            <person name="Melvin J.E."/>
            <person name="Park K."/>
            <person name="Richardson L."/>
            <person name="Schultheis P.J."/>
            <person name="Shull G.E."/>
        </authorList>
    </citation>
    <scope>NUCLEOTIDE SEQUENCE [MRNA]</scope>
    <scope>FUNCTION</scope>
    <scope>TRANSPORTER ACTIVITY</scope>
    <scope>TISSUE SPECIFICITY</scope>
    <source>
        <strain>FVB/N</strain>
        <tissue>Colon</tissue>
    </source>
</reference>
<reference key="2">
    <citation type="journal article" date="2004" name="Genome Res.">
        <title>The status, quality, and expansion of the NIH full-length cDNA project: the Mammalian Gene Collection (MGC).</title>
        <authorList>
            <consortium name="The MGC Project Team"/>
        </authorList>
    </citation>
    <scope>NUCLEOTIDE SEQUENCE [LARGE SCALE MRNA]</scope>
    <source>
        <tissue>Brain</tissue>
    </source>
</reference>
<reference key="3">
    <citation type="journal article" date="2012" name="Biol. Reprod.">
        <title>Participation of the Cl-/HCO(3)- exchangers SLC26A3 and SLC26A6, the Cl- channel CFTR, and the regulatory factor SLC9A3R1 in mouse sperm capacitation.</title>
        <authorList>
            <person name="Chavez J.C."/>
            <person name="Hernandez-Gonzalez E.O."/>
            <person name="Wertheimer E."/>
            <person name="Visconti P.E."/>
            <person name="Darszon A."/>
            <person name="Trevino C.L."/>
        </authorList>
    </citation>
    <scope>FUNCTION</scope>
    <scope>INTERACTION WITH CFTR; SLC26A6 AND NHERF1</scope>
    <scope>SUBCELLULAR LOCATION</scope>
    <scope>TISSUE SPECIFICITY</scope>
    <scope>TRANSPORTER ACTIVITY</scope>
</reference>
<reference key="4">
    <citation type="journal article" date="2012" name="Cell. Signal.">
        <title>Regulation of SLC26A3 activity by NHERF4 PDZ-mediated interaction.</title>
        <authorList>
            <person name="Lee J.H."/>
            <person name="Nam J.H."/>
            <person name="Park J."/>
            <person name="Kang D.W."/>
            <person name="Kim J.Y."/>
            <person name="Lee M.G."/>
            <person name="Yoon J.S."/>
        </authorList>
    </citation>
    <scope>INTERACTION WITH NHERF4</scope>
</reference>
<protein>
    <recommendedName>
        <fullName>Chloride anion exchanger</fullName>
    </recommendedName>
    <alternativeName>
        <fullName>Down-regulated in adenoma</fullName>
        <shortName>Protein DRA</shortName>
    </alternativeName>
    <alternativeName>
        <fullName>Solute carrier family 26 member 3</fullName>
    </alternativeName>
</protein>
<accession>Q9WVC8</accession>
<accession>B2RTD9</accession>
<keyword id="KW-0002">3D-structure</keyword>
<keyword id="KW-0050">Antiport</keyword>
<keyword id="KW-1003">Cell membrane</keyword>
<keyword id="KW-0868">Chloride</keyword>
<keyword id="KW-0325">Glycoprotein</keyword>
<keyword id="KW-0472">Membrane</keyword>
<keyword id="KW-1185">Reference proteome</keyword>
<keyword id="KW-0812">Transmembrane</keyword>
<keyword id="KW-1133">Transmembrane helix</keyword>
<keyword id="KW-0813">Transport</keyword>